<organism>
    <name type="scientific">Oryza sativa subsp. japonica</name>
    <name type="common">Rice</name>
    <dbReference type="NCBI Taxonomy" id="39947"/>
    <lineage>
        <taxon>Eukaryota</taxon>
        <taxon>Viridiplantae</taxon>
        <taxon>Streptophyta</taxon>
        <taxon>Embryophyta</taxon>
        <taxon>Tracheophyta</taxon>
        <taxon>Spermatophyta</taxon>
        <taxon>Magnoliopsida</taxon>
        <taxon>Liliopsida</taxon>
        <taxon>Poales</taxon>
        <taxon>Poaceae</taxon>
        <taxon>BOP clade</taxon>
        <taxon>Oryzoideae</taxon>
        <taxon>Oryzeae</taxon>
        <taxon>Oryzinae</taxon>
        <taxon>Oryza</taxon>
        <taxon>Oryza sativa</taxon>
    </lineage>
</organism>
<evidence type="ECO:0000250" key="1"/>
<evidence type="ECO:0000255" key="2">
    <source>
        <dbReference type="PROSITE-ProRule" id="PRU00176"/>
    </source>
</evidence>
<evidence type="ECO:0000256" key="3">
    <source>
        <dbReference type="SAM" id="MobiDB-lite"/>
    </source>
</evidence>
<evidence type="ECO:0000305" key="4"/>
<evidence type="ECO:0000312" key="5">
    <source>
        <dbReference type="EMBL" id="EEE52422.1"/>
    </source>
</evidence>
<proteinExistence type="evidence at transcript level"/>
<keyword id="KW-0507">mRNA processing</keyword>
<keyword id="KW-0508">mRNA splicing</keyword>
<keyword id="KW-0539">Nucleus</keyword>
<keyword id="KW-1185">Reference proteome</keyword>
<keyword id="KW-0677">Repeat</keyword>
<keyword id="KW-0694">RNA-binding</keyword>
<reference key="1">
    <citation type="journal article" date="2005" name="BMC Biol.">
        <title>The sequence of rice chromosomes 11 and 12, rich in disease resistance genes and recent gene duplications.</title>
        <authorList>
            <consortium name="The rice chromosomes 11 and 12 sequencing consortia"/>
        </authorList>
    </citation>
    <scope>NUCLEOTIDE SEQUENCE [LARGE SCALE GENOMIC DNA]</scope>
    <source>
        <strain>cv. Nipponbare</strain>
    </source>
</reference>
<reference key="2">
    <citation type="journal article" date="2005" name="Nature">
        <title>The map-based sequence of the rice genome.</title>
        <authorList>
            <consortium name="International rice genome sequencing project (IRGSP)"/>
        </authorList>
    </citation>
    <scope>NUCLEOTIDE SEQUENCE [LARGE SCALE GENOMIC DNA]</scope>
    <source>
        <strain>cv. Nipponbare</strain>
    </source>
</reference>
<reference key="3">
    <citation type="journal article" date="2008" name="Nucleic Acids Res.">
        <title>The rice annotation project database (RAP-DB): 2008 update.</title>
        <authorList>
            <consortium name="The rice annotation project (RAP)"/>
        </authorList>
    </citation>
    <scope>GENOME REANNOTATION</scope>
    <source>
        <strain>cv. Nipponbare</strain>
    </source>
</reference>
<reference key="4">
    <citation type="journal article" date="2013" name="Rice">
        <title>Improvement of the Oryza sativa Nipponbare reference genome using next generation sequence and optical map data.</title>
        <authorList>
            <person name="Kawahara Y."/>
            <person name="de la Bastide M."/>
            <person name="Hamilton J.P."/>
            <person name="Kanamori H."/>
            <person name="McCombie W.R."/>
            <person name="Ouyang S."/>
            <person name="Schwartz D.C."/>
            <person name="Tanaka T."/>
            <person name="Wu J."/>
            <person name="Zhou S."/>
            <person name="Childs K.L."/>
            <person name="Davidson R.M."/>
            <person name="Lin H."/>
            <person name="Quesada-Ocampo L."/>
            <person name="Vaillancourt B."/>
            <person name="Sakai H."/>
            <person name="Lee S.S."/>
            <person name="Kim J."/>
            <person name="Numa H."/>
            <person name="Itoh T."/>
            <person name="Buell C.R."/>
            <person name="Matsumoto T."/>
        </authorList>
    </citation>
    <scope>GENOME REANNOTATION</scope>
    <source>
        <strain>cv. Nipponbare</strain>
    </source>
</reference>
<reference key="5">
    <citation type="journal article" date="2005" name="PLoS Biol.">
        <title>The genomes of Oryza sativa: a history of duplications.</title>
        <authorList>
            <person name="Yu J."/>
            <person name="Wang J."/>
            <person name="Lin W."/>
            <person name="Li S."/>
            <person name="Li H."/>
            <person name="Zhou J."/>
            <person name="Ni P."/>
            <person name="Dong W."/>
            <person name="Hu S."/>
            <person name="Zeng C."/>
            <person name="Zhang J."/>
            <person name="Zhang Y."/>
            <person name="Li R."/>
            <person name="Xu Z."/>
            <person name="Li S."/>
            <person name="Li X."/>
            <person name="Zheng H."/>
            <person name="Cong L."/>
            <person name="Lin L."/>
            <person name="Yin J."/>
            <person name="Geng J."/>
            <person name="Li G."/>
            <person name="Shi J."/>
            <person name="Liu J."/>
            <person name="Lv H."/>
            <person name="Li J."/>
            <person name="Wang J."/>
            <person name="Deng Y."/>
            <person name="Ran L."/>
            <person name="Shi X."/>
            <person name="Wang X."/>
            <person name="Wu Q."/>
            <person name="Li C."/>
            <person name="Ren X."/>
            <person name="Wang J."/>
            <person name="Wang X."/>
            <person name="Li D."/>
            <person name="Liu D."/>
            <person name="Zhang X."/>
            <person name="Ji Z."/>
            <person name="Zhao W."/>
            <person name="Sun Y."/>
            <person name="Zhang Z."/>
            <person name="Bao J."/>
            <person name="Han Y."/>
            <person name="Dong L."/>
            <person name="Ji J."/>
            <person name="Chen P."/>
            <person name="Wu S."/>
            <person name="Liu J."/>
            <person name="Xiao Y."/>
            <person name="Bu D."/>
            <person name="Tan J."/>
            <person name="Yang L."/>
            <person name="Ye C."/>
            <person name="Zhang J."/>
            <person name="Xu J."/>
            <person name="Zhou Y."/>
            <person name="Yu Y."/>
            <person name="Zhang B."/>
            <person name="Zhuang S."/>
            <person name="Wei H."/>
            <person name="Liu B."/>
            <person name="Lei M."/>
            <person name="Yu H."/>
            <person name="Li Y."/>
            <person name="Xu H."/>
            <person name="Wei S."/>
            <person name="He X."/>
            <person name="Fang L."/>
            <person name="Zhang Z."/>
            <person name="Zhang Y."/>
            <person name="Huang X."/>
            <person name="Su Z."/>
            <person name="Tong W."/>
            <person name="Li J."/>
            <person name="Tong Z."/>
            <person name="Li S."/>
            <person name="Ye J."/>
            <person name="Wang L."/>
            <person name="Fang L."/>
            <person name="Lei T."/>
            <person name="Chen C.-S."/>
            <person name="Chen H.-C."/>
            <person name="Xu Z."/>
            <person name="Li H."/>
            <person name="Huang H."/>
            <person name="Zhang F."/>
            <person name="Xu H."/>
            <person name="Li N."/>
            <person name="Zhao C."/>
            <person name="Li S."/>
            <person name="Dong L."/>
            <person name="Huang Y."/>
            <person name="Li L."/>
            <person name="Xi Y."/>
            <person name="Qi Q."/>
            <person name="Li W."/>
            <person name="Zhang B."/>
            <person name="Hu W."/>
            <person name="Zhang Y."/>
            <person name="Tian X."/>
            <person name="Jiao Y."/>
            <person name="Liang X."/>
            <person name="Jin J."/>
            <person name="Gao L."/>
            <person name="Zheng W."/>
            <person name="Hao B."/>
            <person name="Liu S.-M."/>
            <person name="Wang W."/>
            <person name="Yuan L."/>
            <person name="Cao M."/>
            <person name="McDermott J."/>
            <person name="Samudrala R."/>
            <person name="Wang J."/>
            <person name="Wong G.K.-S."/>
            <person name="Yang H."/>
        </authorList>
    </citation>
    <scope>NUCLEOTIDE SEQUENCE [LARGE SCALE GENOMIC DNA]</scope>
    <source>
        <strain>cv. Nipponbare</strain>
    </source>
</reference>
<reference key="6">
    <citation type="journal article" date="2003" name="Science">
        <title>Collection, mapping, and annotation of over 28,000 cDNA clones from japonica rice.</title>
        <authorList>
            <consortium name="The rice full-length cDNA consortium"/>
        </authorList>
    </citation>
    <scope>NUCLEOTIDE SEQUENCE [LARGE SCALE MRNA]</scope>
    <source>
        <strain>cv. Nipponbare</strain>
    </source>
</reference>
<reference key="7">
    <citation type="journal article" date="2003" name="Proc. Natl. Acad. Sci. U.S.A.">
        <title>A network of rice genes associated with stress response and seed development.</title>
        <authorList>
            <person name="Cooper B."/>
            <person name="Clarke J.D."/>
            <person name="Budworth P."/>
            <person name="Kreps J."/>
            <person name="Hutchison D."/>
            <person name="Park S."/>
            <person name="Guimil S."/>
            <person name="Dunn M."/>
            <person name="Luginbuehl P."/>
            <person name="Ellero C."/>
            <person name="Goff S.A."/>
            <person name="Glazebrook J."/>
        </authorList>
    </citation>
    <scope>NUCLEOTIDE SEQUENCE [MRNA] OF 219-536</scope>
    <source>
        <strain>cv. Nipponbare</strain>
    </source>
</reference>
<comment type="function">
    <text evidence="1">Necessary for the splicing of pre-mRNA.</text>
</comment>
<comment type="subcellular location">
    <subcellularLocation>
        <location evidence="1">Nucleus</location>
    </subcellularLocation>
</comment>
<comment type="domain">
    <text>N-terminal RS domain has a very strong bias in favor of D over S.</text>
</comment>
<comment type="similarity">
    <text evidence="4">Belongs to the splicing factor SR family.</text>
</comment>
<comment type="sequence caution" evidence="4">
    <conflict type="frameshift">
        <sequence resource="EMBL-CDS" id="AAO72620"/>
    </conflict>
</comment>
<comment type="sequence caution" evidence="4">
    <conflict type="miscellaneous discrepancy">
        <sequence resource="EMBL-CDS" id="AAO72620"/>
    </conflict>
    <text>Sequencing errors.</text>
</comment>
<gene>
    <name type="primary">U2AF65A</name>
    <name type="ordered locus">Os11g0636900</name>
    <name type="ordered locus">LOC_Os11g41820</name>
    <name evidence="5" type="ORF">OsJ_34542</name>
</gene>
<dbReference type="EMBL" id="DP000010">
    <property type="protein sequence ID" value="ABA94914.2"/>
    <property type="molecule type" value="Genomic_DNA"/>
</dbReference>
<dbReference type="EMBL" id="AP008217">
    <property type="protein sequence ID" value="BAF28693.1"/>
    <property type="molecule type" value="Genomic_DNA"/>
</dbReference>
<dbReference type="EMBL" id="AP014967">
    <property type="protein sequence ID" value="BAT14972.1"/>
    <property type="molecule type" value="Genomic_DNA"/>
</dbReference>
<dbReference type="EMBL" id="CM000148">
    <property type="protein sequence ID" value="EEE52422.1"/>
    <property type="molecule type" value="Genomic_DNA"/>
</dbReference>
<dbReference type="EMBL" id="AK073768">
    <property type="status" value="NOT_ANNOTATED_CDS"/>
    <property type="molecule type" value="mRNA"/>
</dbReference>
<dbReference type="EMBL" id="AY224501">
    <property type="protein sequence ID" value="AAO72620.1"/>
    <property type="status" value="ALT_SEQ"/>
    <property type="molecule type" value="mRNA"/>
</dbReference>
<dbReference type="RefSeq" id="XP_015617576.1">
    <property type="nucleotide sequence ID" value="XM_015762090.1"/>
</dbReference>
<dbReference type="SMR" id="Q2R0Q1"/>
<dbReference type="FunCoup" id="Q2R0Q1">
    <property type="interactions" value="3017"/>
</dbReference>
<dbReference type="IntAct" id="Q2R0Q1">
    <property type="interactions" value="1"/>
</dbReference>
<dbReference type="STRING" id="39947.Q2R0Q1"/>
<dbReference type="PaxDb" id="39947-Q2R0Q1"/>
<dbReference type="EnsemblPlants" id="Os11t0636900-02">
    <property type="protein sequence ID" value="Os11t0636900-02"/>
    <property type="gene ID" value="Os11g0636900"/>
</dbReference>
<dbReference type="Gramene" id="Os11t0636900-02">
    <property type="protein sequence ID" value="Os11t0636900-02"/>
    <property type="gene ID" value="Os11g0636900"/>
</dbReference>
<dbReference type="KEGG" id="dosa:Os11g0636900"/>
<dbReference type="eggNOG" id="KOG0120">
    <property type="taxonomic scope" value="Eukaryota"/>
</dbReference>
<dbReference type="HOGENOM" id="CLU_021795_4_1_1"/>
<dbReference type="InParanoid" id="Q2R0Q1"/>
<dbReference type="OMA" id="FIWQRPG"/>
<dbReference type="OrthoDB" id="10266058at2759"/>
<dbReference type="Proteomes" id="UP000000763">
    <property type="component" value="Chromosome 11"/>
</dbReference>
<dbReference type="Proteomes" id="UP000007752">
    <property type="component" value="Chromosome 11"/>
</dbReference>
<dbReference type="Proteomes" id="UP000059680">
    <property type="component" value="Chromosome 11"/>
</dbReference>
<dbReference type="ExpressionAtlas" id="Q2R0Q1">
    <property type="expression patterns" value="baseline and differential"/>
</dbReference>
<dbReference type="GO" id="GO:0000243">
    <property type="term" value="C:commitment complex"/>
    <property type="evidence" value="ECO:0000318"/>
    <property type="project" value="GO_Central"/>
</dbReference>
<dbReference type="GO" id="GO:0016607">
    <property type="term" value="C:nuclear speck"/>
    <property type="evidence" value="ECO:0000318"/>
    <property type="project" value="GO_Central"/>
</dbReference>
<dbReference type="GO" id="GO:0071004">
    <property type="term" value="C:U2-type prespliceosome"/>
    <property type="evidence" value="ECO:0000318"/>
    <property type="project" value="GO_Central"/>
</dbReference>
<dbReference type="GO" id="GO:0089701">
    <property type="term" value="C:U2AF complex"/>
    <property type="evidence" value="ECO:0000318"/>
    <property type="project" value="GO_Central"/>
</dbReference>
<dbReference type="GO" id="GO:0008187">
    <property type="term" value="F:poly-pyrimidine tract binding"/>
    <property type="evidence" value="ECO:0000318"/>
    <property type="project" value="GO_Central"/>
</dbReference>
<dbReference type="GO" id="GO:0030628">
    <property type="term" value="F:pre-mRNA 3'-splice site binding"/>
    <property type="evidence" value="ECO:0000318"/>
    <property type="project" value="GO_Central"/>
</dbReference>
<dbReference type="GO" id="GO:0000245">
    <property type="term" value="P:spliceosomal complex assembly"/>
    <property type="evidence" value="ECO:0000318"/>
    <property type="project" value="GO_Central"/>
</dbReference>
<dbReference type="CDD" id="cd12230">
    <property type="entry name" value="RRM1_U2AF65"/>
    <property type="match status" value="1"/>
</dbReference>
<dbReference type="CDD" id="cd12231">
    <property type="entry name" value="RRM2_U2AF65"/>
    <property type="match status" value="1"/>
</dbReference>
<dbReference type="CDD" id="cd12232">
    <property type="entry name" value="RRM3_U2AF65"/>
    <property type="match status" value="1"/>
</dbReference>
<dbReference type="FunFam" id="3.30.70.330:FF:000057">
    <property type="entry name" value="U2 snRNP auxiliary factor large subunit"/>
    <property type="match status" value="1"/>
</dbReference>
<dbReference type="FunFam" id="3.30.70.330:FF:000111">
    <property type="entry name" value="U2 snRNP auxiliary factor large subunit"/>
    <property type="match status" value="1"/>
</dbReference>
<dbReference type="FunFam" id="3.30.70.330:FF:000225">
    <property type="entry name" value="U2 snRNP auxiliary factor large subunit"/>
    <property type="match status" value="1"/>
</dbReference>
<dbReference type="Gene3D" id="3.30.70.330">
    <property type="match status" value="3"/>
</dbReference>
<dbReference type="InterPro" id="IPR012677">
    <property type="entry name" value="Nucleotide-bd_a/b_plait_sf"/>
</dbReference>
<dbReference type="InterPro" id="IPR035979">
    <property type="entry name" value="RBD_domain_sf"/>
</dbReference>
<dbReference type="InterPro" id="IPR000504">
    <property type="entry name" value="RRM_dom"/>
</dbReference>
<dbReference type="InterPro" id="IPR003954">
    <property type="entry name" value="RRM_dom_euk"/>
</dbReference>
<dbReference type="InterPro" id="IPR006529">
    <property type="entry name" value="U2AF_lg"/>
</dbReference>
<dbReference type="NCBIfam" id="TIGR01642">
    <property type="entry name" value="U2AF_lg"/>
    <property type="match status" value="1"/>
</dbReference>
<dbReference type="PANTHER" id="PTHR23139">
    <property type="entry name" value="RNA-BINDING PROTEIN"/>
    <property type="match status" value="1"/>
</dbReference>
<dbReference type="Pfam" id="PF00076">
    <property type="entry name" value="RRM_1"/>
    <property type="match status" value="1"/>
</dbReference>
<dbReference type="SMART" id="SM00360">
    <property type="entry name" value="RRM"/>
    <property type="match status" value="3"/>
</dbReference>
<dbReference type="SMART" id="SM00361">
    <property type="entry name" value="RRM_1"/>
    <property type="match status" value="2"/>
</dbReference>
<dbReference type="SUPFAM" id="SSF54928">
    <property type="entry name" value="RNA-binding domain, RBD"/>
    <property type="match status" value="2"/>
</dbReference>
<dbReference type="PROSITE" id="PS50102">
    <property type="entry name" value="RRM"/>
    <property type="match status" value="2"/>
</dbReference>
<feature type="chain" id="PRO_0000352271" description="Splicing factor U2af large subunit A">
    <location>
        <begin position="1"/>
        <end position="574"/>
    </location>
</feature>
<feature type="domain" description="RRM 1" evidence="2">
    <location>
        <begin position="238"/>
        <end position="321"/>
    </location>
</feature>
<feature type="domain" description="RRM 2" evidence="2">
    <location>
        <begin position="358"/>
        <end position="436"/>
    </location>
</feature>
<feature type="domain" description="RRM 3" evidence="2">
    <location>
        <begin position="479"/>
        <end position="565"/>
    </location>
</feature>
<feature type="region of interest" description="Disordered" evidence="3">
    <location>
        <begin position="1"/>
        <end position="180"/>
    </location>
</feature>
<feature type="compositionally biased region" description="Low complexity" evidence="3">
    <location>
        <begin position="18"/>
        <end position="41"/>
    </location>
</feature>
<feature type="compositionally biased region" description="Basic and acidic residues" evidence="3">
    <location>
        <begin position="53"/>
        <end position="143"/>
    </location>
</feature>
<feature type="compositionally biased region" description="Basic residues" evidence="3">
    <location>
        <begin position="144"/>
        <end position="172"/>
    </location>
</feature>
<feature type="sequence conflict" description="In Ref. 6; AK073768." evidence="4" ref="6">
    <original>R</original>
    <variation>S</variation>
    <location>
        <position position="101"/>
    </location>
</feature>
<protein>
    <recommendedName>
        <fullName>Splicing factor U2af large subunit A</fullName>
    </recommendedName>
    <alternativeName>
        <fullName>U2 auxiliary factor 65 kDa subunit A</fullName>
    </alternativeName>
    <alternativeName>
        <fullName>U2 small nuclear ribonucleoprotein auxiliary factor large subunit A</fullName>
        <shortName>U2 snRNP auxiliary factor large subunit A</shortName>
    </alternativeName>
</protein>
<accession>Q2R0Q1</accession>
<accession>B9G8F7</accession>
<accession>Q84P67</accession>
<sequence>MAEHEEQPYEGNGNGGDPAPASAYAEYPAPEGSPPAAAAKPTGFSDGATDGGRSQHETQPHDGRSSKSRERERERDKDKERDRDRDRDRRDRDRGDKDRDRDRHREHRDRSERREHHDRERSDDRDRRRGHDSERRRDRDRDGHRRHRSRSRSPSKGRDRRSRSRSRSRSSKRVSGFDQGPQAAIPALAAGAAPGQVPVVAPAISGMLPNMFNLTQTPFTPLVIQPQAMTQQATRHARRVYVGGLPPTANEHTVAVYFNQVMAAVGGNTAGPGDAVLNVYINHDKKFAFVEMRSVEEASNAMALDGIMFEGAPVKVRRPTDYNPSLAAALGPSQPNPNLNLAAVGLTPGSAGGLEGPDRIFVGGLPYYFTEAQVRELLESFGPLRGFDLVKDRETGNSKGYAFCVYQDLNVTDIACAALNGIKMGDKTLTVRRANQGASQPRPEQESMLLHVQQQAQMQKLMFQVGGGALPTKVVCLTQVVSPDELRDDEEYEDIVQDMREEGCRYGNLVKVVIPRPDPSGAPVAGVGRVFLEFADVESSTKAKNGMHGRKFANNQVVAVFYPEDKFAEGQYDG</sequence>
<name>U2A2A_ORYSJ</name>